<dbReference type="EC" id="2.7.7.7" evidence="1"/>
<dbReference type="EMBL" id="CP000262">
    <property type="protein sequence ID" value="ABF38577.1"/>
    <property type="molecule type" value="Genomic_DNA"/>
</dbReference>
<dbReference type="SMR" id="Q1J509"/>
<dbReference type="KEGG" id="spi:MGAS10750_Spy1627"/>
<dbReference type="HOGENOM" id="CLU_012348_1_2_9"/>
<dbReference type="Proteomes" id="UP000002434">
    <property type="component" value="Chromosome"/>
</dbReference>
<dbReference type="GO" id="GO:0005829">
    <property type="term" value="C:cytosol"/>
    <property type="evidence" value="ECO:0007669"/>
    <property type="project" value="TreeGrafter"/>
</dbReference>
<dbReference type="GO" id="GO:0003684">
    <property type="term" value="F:damaged DNA binding"/>
    <property type="evidence" value="ECO:0007669"/>
    <property type="project" value="InterPro"/>
</dbReference>
<dbReference type="GO" id="GO:0003887">
    <property type="term" value="F:DNA-directed DNA polymerase activity"/>
    <property type="evidence" value="ECO:0007669"/>
    <property type="project" value="UniProtKB-UniRule"/>
</dbReference>
<dbReference type="GO" id="GO:0000287">
    <property type="term" value="F:magnesium ion binding"/>
    <property type="evidence" value="ECO:0007669"/>
    <property type="project" value="UniProtKB-UniRule"/>
</dbReference>
<dbReference type="GO" id="GO:0006261">
    <property type="term" value="P:DNA-templated DNA replication"/>
    <property type="evidence" value="ECO:0007669"/>
    <property type="project" value="UniProtKB-UniRule"/>
</dbReference>
<dbReference type="GO" id="GO:0042276">
    <property type="term" value="P:error-prone translesion synthesis"/>
    <property type="evidence" value="ECO:0007669"/>
    <property type="project" value="TreeGrafter"/>
</dbReference>
<dbReference type="GO" id="GO:0009432">
    <property type="term" value="P:SOS response"/>
    <property type="evidence" value="ECO:0007669"/>
    <property type="project" value="TreeGrafter"/>
</dbReference>
<dbReference type="CDD" id="cd03586">
    <property type="entry name" value="PolY_Pol_IV_kappa"/>
    <property type="match status" value="1"/>
</dbReference>
<dbReference type="FunFam" id="3.30.1490.100:FF:000004">
    <property type="entry name" value="DNA polymerase IV"/>
    <property type="match status" value="1"/>
</dbReference>
<dbReference type="FunFam" id="3.40.1170.60:FF:000001">
    <property type="entry name" value="DNA polymerase IV"/>
    <property type="match status" value="1"/>
</dbReference>
<dbReference type="Gene3D" id="3.30.70.270">
    <property type="match status" value="1"/>
</dbReference>
<dbReference type="Gene3D" id="3.40.1170.60">
    <property type="match status" value="1"/>
</dbReference>
<dbReference type="Gene3D" id="1.10.150.20">
    <property type="entry name" value="5' to 3' exonuclease, C-terminal subdomain"/>
    <property type="match status" value="1"/>
</dbReference>
<dbReference type="Gene3D" id="3.30.1490.100">
    <property type="entry name" value="DNA polymerase, Y-family, little finger domain"/>
    <property type="match status" value="1"/>
</dbReference>
<dbReference type="HAMAP" id="MF_01113">
    <property type="entry name" value="DNApol_IV"/>
    <property type="match status" value="1"/>
</dbReference>
<dbReference type="InterPro" id="IPR043502">
    <property type="entry name" value="DNA/RNA_pol_sf"/>
</dbReference>
<dbReference type="InterPro" id="IPR036775">
    <property type="entry name" value="DNA_pol_Y-fam_lit_finger_sf"/>
</dbReference>
<dbReference type="InterPro" id="IPR017961">
    <property type="entry name" value="DNA_pol_Y-fam_little_finger"/>
</dbReference>
<dbReference type="InterPro" id="IPR050116">
    <property type="entry name" value="DNA_polymerase-Y"/>
</dbReference>
<dbReference type="InterPro" id="IPR022880">
    <property type="entry name" value="DNApol_IV"/>
</dbReference>
<dbReference type="InterPro" id="IPR024728">
    <property type="entry name" value="PolY_HhH_motif"/>
</dbReference>
<dbReference type="InterPro" id="IPR043128">
    <property type="entry name" value="Rev_trsase/Diguanyl_cyclase"/>
</dbReference>
<dbReference type="InterPro" id="IPR001126">
    <property type="entry name" value="UmuC"/>
</dbReference>
<dbReference type="NCBIfam" id="NF002677">
    <property type="entry name" value="PRK02406.1"/>
    <property type="match status" value="1"/>
</dbReference>
<dbReference type="PANTHER" id="PTHR11076:SF33">
    <property type="entry name" value="DNA POLYMERASE KAPPA"/>
    <property type="match status" value="1"/>
</dbReference>
<dbReference type="PANTHER" id="PTHR11076">
    <property type="entry name" value="DNA REPAIR POLYMERASE UMUC / TRANSFERASE FAMILY MEMBER"/>
    <property type="match status" value="1"/>
</dbReference>
<dbReference type="Pfam" id="PF00817">
    <property type="entry name" value="IMS"/>
    <property type="match status" value="1"/>
</dbReference>
<dbReference type="Pfam" id="PF11799">
    <property type="entry name" value="IMS_C"/>
    <property type="match status" value="1"/>
</dbReference>
<dbReference type="Pfam" id="PF11798">
    <property type="entry name" value="IMS_HHH"/>
    <property type="match status" value="1"/>
</dbReference>
<dbReference type="SUPFAM" id="SSF56672">
    <property type="entry name" value="DNA/RNA polymerases"/>
    <property type="match status" value="1"/>
</dbReference>
<dbReference type="SUPFAM" id="SSF100879">
    <property type="entry name" value="Lesion bypass DNA polymerase (Y-family), little finger domain"/>
    <property type="match status" value="1"/>
</dbReference>
<dbReference type="PROSITE" id="PS50173">
    <property type="entry name" value="UMUC"/>
    <property type="match status" value="1"/>
</dbReference>
<keyword id="KW-0963">Cytoplasm</keyword>
<keyword id="KW-0227">DNA damage</keyword>
<keyword id="KW-0234">DNA repair</keyword>
<keyword id="KW-0235">DNA replication</keyword>
<keyword id="KW-0238">DNA-binding</keyword>
<keyword id="KW-0239">DNA-directed DNA polymerase</keyword>
<keyword id="KW-0460">Magnesium</keyword>
<keyword id="KW-0479">Metal-binding</keyword>
<keyword id="KW-0515">Mutator protein</keyword>
<keyword id="KW-0548">Nucleotidyltransferase</keyword>
<keyword id="KW-0808">Transferase</keyword>
<name>DPO4_STRPF</name>
<accession>Q1J509</accession>
<protein>
    <recommendedName>
        <fullName evidence="1">DNA polymerase IV</fullName>
        <shortName evidence="1">Pol IV</shortName>
        <ecNumber evidence="1">2.7.7.7</ecNumber>
    </recommendedName>
</protein>
<gene>
    <name evidence="1" type="primary">dinB</name>
    <name type="ordered locus">MGAS10750_Spy1627</name>
</gene>
<sequence>MLIFPLINDTSRKIIHIDMDAFFAAVEERDNPALKGKPVVIGKDPRETGGRGVVSTCNYEARKYGIHSAMSCKEAYERCPKAIFISGNYEKYRTVGDQIRRIFKRYTDVVEPMSIDEAYVDVTNNKLGIKSAVKIAKLIQHDMWKEVGLTCSAGVSYNKFLGKLASDFEKPHGLTLVLKEDALCFLAKLPIEKFHGVGKKSVEKLHDMGIYTGQDLLAVPEMTLIDHFGRFGFDLYRKARGISNSPVKSDRIRKSIGSERTYAKLLYQETDIKAEISKNAKRVAALLQDHKKLGKTIVLKVRYADFTTLTKRVTLPELTRNAAQIEQVAGDIFDSLSENPAGIRLLGVTMTNLEDKVADISLDL</sequence>
<comment type="function">
    <text evidence="1">Poorly processive, error-prone DNA polymerase involved in untargeted mutagenesis. Copies undamaged DNA at stalled replication forks, which arise in vivo from mismatched or misaligned primer ends. These misaligned primers can be extended by PolIV. Exhibits no 3'-5' exonuclease (proofreading) activity. May be involved in translesional synthesis, in conjunction with the beta clamp from PolIII.</text>
</comment>
<comment type="catalytic activity">
    <reaction evidence="1">
        <text>DNA(n) + a 2'-deoxyribonucleoside 5'-triphosphate = DNA(n+1) + diphosphate</text>
        <dbReference type="Rhea" id="RHEA:22508"/>
        <dbReference type="Rhea" id="RHEA-COMP:17339"/>
        <dbReference type="Rhea" id="RHEA-COMP:17340"/>
        <dbReference type="ChEBI" id="CHEBI:33019"/>
        <dbReference type="ChEBI" id="CHEBI:61560"/>
        <dbReference type="ChEBI" id="CHEBI:173112"/>
        <dbReference type="EC" id="2.7.7.7"/>
    </reaction>
</comment>
<comment type="cofactor">
    <cofactor evidence="1">
        <name>Mg(2+)</name>
        <dbReference type="ChEBI" id="CHEBI:18420"/>
    </cofactor>
    <text evidence="1">Binds 2 magnesium ions per subunit.</text>
</comment>
<comment type="subunit">
    <text evidence="1">Monomer.</text>
</comment>
<comment type="subcellular location">
    <subcellularLocation>
        <location evidence="1">Cytoplasm</location>
    </subcellularLocation>
</comment>
<comment type="similarity">
    <text evidence="1">Belongs to the DNA polymerase type-Y family.</text>
</comment>
<organism>
    <name type="scientific">Streptococcus pyogenes serotype M4 (strain MGAS10750)</name>
    <dbReference type="NCBI Taxonomy" id="370554"/>
    <lineage>
        <taxon>Bacteria</taxon>
        <taxon>Bacillati</taxon>
        <taxon>Bacillota</taxon>
        <taxon>Bacilli</taxon>
        <taxon>Lactobacillales</taxon>
        <taxon>Streptococcaceae</taxon>
        <taxon>Streptococcus</taxon>
    </lineage>
</organism>
<proteinExistence type="inferred from homology"/>
<evidence type="ECO:0000255" key="1">
    <source>
        <dbReference type="HAMAP-Rule" id="MF_01113"/>
    </source>
</evidence>
<feature type="chain" id="PRO_1000084957" description="DNA polymerase IV">
    <location>
        <begin position="1"/>
        <end position="364"/>
    </location>
</feature>
<feature type="domain" description="UmuC" evidence="1">
    <location>
        <begin position="14"/>
        <end position="198"/>
    </location>
</feature>
<feature type="active site" evidence="1">
    <location>
        <position position="117"/>
    </location>
</feature>
<feature type="binding site" evidence="1">
    <location>
        <position position="18"/>
    </location>
    <ligand>
        <name>Mg(2+)</name>
        <dbReference type="ChEBI" id="CHEBI:18420"/>
    </ligand>
</feature>
<feature type="binding site" evidence="1">
    <location>
        <position position="116"/>
    </location>
    <ligand>
        <name>Mg(2+)</name>
        <dbReference type="ChEBI" id="CHEBI:18420"/>
    </ligand>
</feature>
<feature type="site" description="Substrate discrimination" evidence="1">
    <location>
        <position position="23"/>
    </location>
</feature>
<reference key="1">
    <citation type="journal article" date="2006" name="Proc. Natl. Acad. Sci. U.S.A.">
        <title>Molecular genetic anatomy of inter- and intraserotype variation in the human bacterial pathogen group A Streptococcus.</title>
        <authorList>
            <person name="Beres S.B."/>
            <person name="Richter E.W."/>
            <person name="Nagiec M.J."/>
            <person name="Sumby P."/>
            <person name="Porcella S.F."/>
            <person name="DeLeo F.R."/>
            <person name="Musser J.M."/>
        </authorList>
    </citation>
    <scope>NUCLEOTIDE SEQUENCE [LARGE SCALE GENOMIC DNA]</scope>
    <source>
        <strain>MGAS10750</strain>
    </source>
</reference>